<accession>C3L8Q0</accession>
<reference key="1">
    <citation type="submission" date="2008-10" db="EMBL/GenBank/DDBJ databases">
        <title>Genome sequence of Bacillus anthracis str. CDC 684.</title>
        <authorList>
            <person name="Dodson R.J."/>
            <person name="Munk A.C."/>
            <person name="Brettin T."/>
            <person name="Bruce D."/>
            <person name="Detter C."/>
            <person name="Tapia R."/>
            <person name="Han C."/>
            <person name="Sutton G."/>
            <person name="Sims D."/>
        </authorList>
    </citation>
    <scope>NUCLEOTIDE SEQUENCE [LARGE SCALE GENOMIC DNA]</scope>
    <source>
        <strain>CDC 684 / NRRL 3495</strain>
    </source>
</reference>
<sequence length="279" mass="30535">MKTKTDFLKMKEQGEPITMLTAYDYPSAKLAEEAEVDMILVGDSLGMVVLGYDSTVPVTVEDMIHHTKAVRRGAKETFIVTDMPFMSYHVSLQDTMVNARRIVQESGAHALKVEGAGEVISTIHYLTNAGIPVVAHLGLTPQSVGVLGGYKVQGKDAESAKKLIEDAKKCEEAGAIALVLECVPMQLAELISEQLTIPTIGIGAGQKVDGQVLVYHDLISYGVNRVPKFVKQYTSVQEEIVRGISQYVAEVKTRQFPEEKHSFTMKEEECLALYGGKQS</sequence>
<organism>
    <name type="scientific">Bacillus anthracis (strain CDC 684 / NRRL 3495)</name>
    <dbReference type="NCBI Taxonomy" id="568206"/>
    <lineage>
        <taxon>Bacteria</taxon>
        <taxon>Bacillati</taxon>
        <taxon>Bacillota</taxon>
        <taxon>Bacilli</taxon>
        <taxon>Bacillales</taxon>
        <taxon>Bacillaceae</taxon>
        <taxon>Bacillus</taxon>
        <taxon>Bacillus cereus group</taxon>
    </lineage>
</organism>
<gene>
    <name evidence="1" type="primary">panB</name>
    <name type="ordered locus">BAMEG_3033</name>
</gene>
<keyword id="KW-0963">Cytoplasm</keyword>
<keyword id="KW-0460">Magnesium</keyword>
<keyword id="KW-0479">Metal-binding</keyword>
<keyword id="KW-0566">Pantothenate biosynthesis</keyword>
<keyword id="KW-0808">Transferase</keyword>
<evidence type="ECO:0000255" key="1">
    <source>
        <dbReference type="HAMAP-Rule" id="MF_00156"/>
    </source>
</evidence>
<feature type="chain" id="PRO_1000123369" description="3-methyl-2-oxobutanoate hydroxymethyltransferase">
    <location>
        <begin position="1"/>
        <end position="279"/>
    </location>
</feature>
<feature type="active site" description="Proton acceptor" evidence="1">
    <location>
        <position position="181"/>
    </location>
</feature>
<feature type="binding site" evidence="1">
    <location>
        <begin position="43"/>
        <end position="44"/>
    </location>
    <ligand>
        <name>3-methyl-2-oxobutanoate</name>
        <dbReference type="ChEBI" id="CHEBI:11851"/>
    </ligand>
</feature>
<feature type="binding site" evidence="1">
    <location>
        <position position="43"/>
    </location>
    <ligand>
        <name>Mg(2+)</name>
        <dbReference type="ChEBI" id="CHEBI:18420"/>
    </ligand>
</feature>
<feature type="binding site" evidence="1">
    <location>
        <position position="82"/>
    </location>
    <ligand>
        <name>3-methyl-2-oxobutanoate</name>
        <dbReference type="ChEBI" id="CHEBI:11851"/>
    </ligand>
</feature>
<feature type="binding site" evidence="1">
    <location>
        <position position="82"/>
    </location>
    <ligand>
        <name>Mg(2+)</name>
        <dbReference type="ChEBI" id="CHEBI:18420"/>
    </ligand>
</feature>
<feature type="binding site" evidence="1">
    <location>
        <position position="112"/>
    </location>
    <ligand>
        <name>3-methyl-2-oxobutanoate</name>
        <dbReference type="ChEBI" id="CHEBI:11851"/>
    </ligand>
</feature>
<feature type="binding site" evidence="1">
    <location>
        <position position="114"/>
    </location>
    <ligand>
        <name>Mg(2+)</name>
        <dbReference type="ChEBI" id="CHEBI:18420"/>
    </ligand>
</feature>
<comment type="function">
    <text evidence="1">Catalyzes the reversible reaction in which hydroxymethyl group from 5,10-methylenetetrahydrofolate is transferred onto alpha-ketoisovalerate to form ketopantoate.</text>
</comment>
<comment type="catalytic activity">
    <reaction evidence="1">
        <text>3-methyl-2-oxobutanoate + (6R)-5,10-methylene-5,6,7,8-tetrahydrofolate + H2O = 2-dehydropantoate + (6S)-5,6,7,8-tetrahydrofolate</text>
        <dbReference type="Rhea" id="RHEA:11824"/>
        <dbReference type="ChEBI" id="CHEBI:11561"/>
        <dbReference type="ChEBI" id="CHEBI:11851"/>
        <dbReference type="ChEBI" id="CHEBI:15377"/>
        <dbReference type="ChEBI" id="CHEBI:15636"/>
        <dbReference type="ChEBI" id="CHEBI:57453"/>
        <dbReference type="EC" id="2.1.2.11"/>
    </reaction>
</comment>
<comment type="cofactor">
    <cofactor evidence="1">
        <name>Mg(2+)</name>
        <dbReference type="ChEBI" id="CHEBI:18420"/>
    </cofactor>
    <text evidence="1">Binds 1 Mg(2+) ion per subunit.</text>
</comment>
<comment type="pathway">
    <text evidence="1">Cofactor biosynthesis; (R)-pantothenate biosynthesis; (R)-pantoate from 3-methyl-2-oxobutanoate: step 1/2.</text>
</comment>
<comment type="subunit">
    <text evidence="1">Homodecamer; pentamer of dimers.</text>
</comment>
<comment type="subcellular location">
    <subcellularLocation>
        <location evidence="1">Cytoplasm</location>
    </subcellularLocation>
</comment>
<comment type="similarity">
    <text evidence="1">Belongs to the PanB family.</text>
</comment>
<proteinExistence type="inferred from homology"/>
<dbReference type="EC" id="2.1.2.11" evidence="1"/>
<dbReference type="EMBL" id="CP001215">
    <property type="protein sequence ID" value="ACP15574.1"/>
    <property type="molecule type" value="Genomic_DNA"/>
</dbReference>
<dbReference type="RefSeq" id="WP_000851103.1">
    <property type="nucleotide sequence ID" value="NC_012581.1"/>
</dbReference>
<dbReference type="SMR" id="C3L8Q0"/>
<dbReference type="GeneID" id="45021534"/>
<dbReference type="KEGG" id="bah:BAMEG_3033"/>
<dbReference type="HOGENOM" id="CLU_036645_1_0_9"/>
<dbReference type="UniPathway" id="UPA00028">
    <property type="reaction ID" value="UER00003"/>
</dbReference>
<dbReference type="GO" id="GO:0005737">
    <property type="term" value="C:cytoplasm"/>
    <property type="evidence" value="ECO:0007669"/>
    <property type="project" value="UniProtKB-SubCell"/>
</dbReference>
<dbReference type="GO" id="GO:0003864">
    <property type="term" value="F:3-methyl-2-oxobutanoate hydroxymethyltransferase activity"/>
    <property type="evidence" value="ECO:0007669"/>
    <property type="project" value="UniProtKB-UniRule"/>
</dbReference>
<dbReference type="GO" id="GO:0000287">
    <property type="term" value="F:magnesium ion binding"/>
    <property type="evidence" value="ECO:0007669"/>
    <property type="project" value="TreeGrafter"/>
</dbReference>
<dbReference type="GO" id="GO:0015940">
    <property type="term" value="P:pantothenate biosynthetic process"/>
    <property type="evidence" value="ECO:0007669"/>
    <property type="project" value="UniProtKB-UniRule"/>
</dbReference>
<dbReference type="CDD" id="cd06557">
    <property type="entry name" value="KPHMT-like"/>
    <property type="match status" value="1"/>
</dbReference>
<dbReference type="FunFam" id="3.20.20.60:FF:000003">
    <property type="entry name" value="3-methyl-2-oxobutanoate hydroxymethyltransferase"/>
    <property type="match status" value="1"/>
</dbReference>
<dbReference type="Gene3D" id="3.20.20.60">
    <property type="entry name" value="Phosphoenolpyruvate-binding domains"/>
    <property type="match status" value="1"/>
</dbReference>
<dbReference type="HAMAP" id="MF_00156">
    <property type="entry name" value="PanB"/>
    <property type="match status" value="1"/>
</dbReference>
<dbReference type="InterPro" id="IPR003700">
    <property type="entry name" value="Pantoate_hydroxy_MeTrfase"/>
</dbReference>
<dbReference type="InterPro" id="IPR015813">
    <property type="entry name" value="Pyrv/PenolPyrv_kinase-like_dom"/>
</dbReference>
<dbReference type="InterPro" id="IPR040442">
    <property type="entry name" value="Pyrv_kinase-like_dom_sf"/>
</dbReference>
<dbReference type="NCBIfam" id="TIGR00222">
    <property type="entry name" value="panB"/>
    <property type="match status" value="1"/>
</dbReference>
<dbReference type="NCBIfam" id="NF001452">
    <property type="entry name" value="PRK00311.1"/>
    <property type="match status" value="1"/>
</dbReference>
<dbReference type="PANTHER" id="PTHR20881">
    <property type="entry name" value="3-METHYL-2-OXOBUTANOATE HYDROXYMETHYLTRANSFERASE"/>
    <property type="match status" value="1"/>
</dbReference>
<dbReference type="PANTHER" id="PTHR20881:SF0">
    <property type="entry name" value="3-METHYL-2-OXOBUTANOATE HYDROXYMETHYLTRANSFERASE"/>
    <property type="match status" value="1"/>
</dbReference>
<dbReference type="Pfam" id="PF02548">
    <property type="entry name" value="Pantoate_transf"/>
    <property type="match status" value="1"/>
</dbReference>
<dbReference type="PIRSF" id="PIRSF000388">
    <property type="entry name" value="Pantoate_hydroxy_MeTrfase"/>
    <property type="match status" value="1"/>
</dbReference>
<dbReference type="SUPFAM" id="SSF51621">
    <property type="entry name" value="Phosphoenolpyruvate/pyruvate domain"/>
    <property type="match status" value="1"/>
</dbReference>
<protein>
    <recommendedName>
        <fullName evidence="1">3-methyl-2-oxobutanoate hydroxymethyltransferase</fullName>
        <ecNumber evidence="1">2.1.2.11</ecNumber>
    </recommendedName>
    <alternativeName>
        <fullName evidence="1">Ketopantoate hydroxymethyltransferase</fullName>
        <shortName evidence="1">KPHMT</shortName>
    </alternativeName>
</protein>
<name>PANB_BACAC</name>